<dbReference type="EMBL" id="K00746">
    <property type="protein sequence ID" value="AAA38691.1"/>
    <property type="molecule type" value="mRNA"/>
</dbReference>
<dbReference type="SMR" id="P04945"/>
<dbReference type="FunCoup" id="P04945">
    <property type="interactions" value="723"/>
</dbReference>
<dbReference type="STRING" id="10090.ENSMUSP00000137031"/>
<dbReference type="CPTAC" id="non-CPTAC-3550"/>
<dbReference type="jPOST" id="P04945"/>
<dbReference type="PeptideAtlas" id="P04945"/>
<dbReference type="AGR" id="MGI:2686370"/>
<dbReference type="MGI" id="MGI:2686370">
    <property type="gene designation" value="Gm1524"/>
</dbReference>
<dbReference type="InParanoid" id="P04945"/>
<dbReference type="PRO" id="PR:P04945"/>
<dbReference type="Proteomes" id="UP000000589">
    <property type="component" value="Unplaced"/>
</dbReference>
<dbReference type="RNAct" id="P04945">
    <property type="molecule type" value="protein"/>
</dbReference>
<dbReference type="GO" id="GO:0019814">
    <property type="term" value="C:immunoglobulin complex"/>
    <property type="evidence" value="ECO:0007669"/>
    <property type="project" value="UniProtKB-KW"/>
</dbReference>
<dbReference type="GO" id="GO:0002250">
    <property type="term" value="P:adaptive immune response"/>
    <property type="evidence" value="ECO:0007669"/>
    <property type="project" value="UniProtKB-KW"/>
</dbReference>
<dbReference type="FunFam" id="2.60.40.10:FF:001317">
    <property type="entry name" value="Immunoglobulin kappa chain variable 4-54"/>
    <property type="match status" value="1"/>
</dbReference>
<dbReference type="Gene3D" id="2.60.40.10">
    <property type="entry name" value="Immunoglobulins"/>
    <property type="match status" value="1"/>
</dbReference>
<dbReference type="InterPro" id="IPR007110">
    <property type="entry name" value="Ig-like_dom"/>
</dbReference>
<dbReference type="InterPro" id="IPR036179">
    <property type="entry name" value="Ig-like_dom_sf"/>
</dbReference>
<dbReference type="InterPro" id="IPR013783">
    <property type="entry name" value="Ig-like_fold"/>
</dbReference>
<dbReference type="InterPro" id="IPR003599">
    <property type="entry name" value="Ig_sub"/>
</dbReference>
<dbReference type="InterPro" id="IPR013106">
    <property type="entry name" value="Ig_V-set"/>
</dbReference>
<dbReference type="InterPro" id="IPR050150">
    <property type="entry name" value="IgV_Light_Chain"/>
</dbReference>
<dbReference type="PANTHER" id="PTHR23267">
    <property type="entry name" value="IMMUNOGLOBULIN LIGHT CHAIN"/>
    <property type="match status" value="1"/>
</dbReference>
<dbReference type="Pfam" id="PF07686">
    <property type="entry name" value="V-set"/>
    <property type="match status" value="1"/>
</dbReference>
<dbReference type="SMART" id="SM00409">
    <property type="entry name" value="IG"/>
    <property type="match status" value="1"/>
</dbReference>
<dbReference type="SMART" id="SM00406">
    <property type="entry name" value="IGv"/>
    <property type="match status" value="1"/>
</dbReference>
<dbReference type="SUPFAM" id="SSF48726">
    <property type="entry name" value="Immunoglobulin"/>
    <property type="match status" value="1"/>
</dbReference>
<dbReference type="PROSITE" id="PS50835">
    <property type="entry name" value="IG_LIKE"/>
    <property type="match status" value="1"/>
</dbReference>
<protein>
    <recommendedName>
        <fullName>Ig kappa chain V-VI region NQ2-6.1</fullName>
    </recommendedName>
</protein>
<name>KV6AB_MOUSE</name>
<reference key="1">
    <citation type="journal article" date="1983" name="Nature">
        <title>mRNA sequences define an unusually restricted IgG response to 2-phenyloxazolone and its early diversification.</title>
        <authorList>
            <person name="Kaartinen M."/>
            <person name="Griffiths G.M."/>
            <person name="Markham A.F."/>
            <person name="Milstein C."/>
        </authorList>
    </citation>
    <scope>NUCLEOTIDE SEQUENCE [MRNA]</scope>
</reference>
<sequence>QILLTQSPAIMSASPGQKVTMTCSASSSVSYMYWYQQKPGSSPRLLIYDTSNLASGVPVRFSGSGSATSYSLTITRMQAEDAATYYCQQWSSYPPMLTFGAGTKLELK</sequence>
<proteinExistence type="evidence at transcript level"/>
<organism>
    <name type="scientific">Mus musculus</name>
    <name type="common">Mouse</name>
    <dbReference type="NCBI Taxonomy" id="10090"/>
    <lineage>
        <taxon>Eukaryota</taxon>
        <taxon>Metazoa</taxon>
        <taxon>Chordata</taxon>
        <taxon>Craniata</taxon>
        <taxon>Vertebrata</taxon>
        <taxon>Euteleostomi</taxon>
        <taxon>Mammalia</taxon>
        <taxon>Eutheria</taxon>
        <taxon>Euarchontoglires</taxon>
        <taxon>Glires</taxon>
        <taxon>Rodentia</taxon>
        <taxon>Myomorpha</taxon>
        <taxon>Muroidea</taxon>
        <taxon>Muridae</taxon>
        <taxon>Murinae</taxon>
        <taxon>Mus</taxon>
        <taxon>Mus</taxon>
    </lineage>
</organism>
<evidence type="ECO:0000255" key="1">
    <source>
        <dbReference type="PROSITE-ProRule" id="PRU00114"/>
    </source>
</evidence>
<accession>P04945</accession>
<keyword id="KW-1064">Adaptive immunity</keyword>
<keyword id="KW-1015">Disulfide bond</keyword>
<keyword id="KW-0374">Hybridoma</keyword>
<keyword id="KW-0391">Immunity</keyword>
<keyword id="KW-1280">Immunoglobulin</keyword>
<keyword id="KW-1185">Reference proteome</keyword>
<feature type="chain" id="PRO_0000059820" description="Ig kappa chain V-VI region NQ2-6.1">
    <location>
        <begin position="1"/>
        <end position="108" status="greater than"/>
    </location>
</feature>
<feature type="region of interest" description="Framework-1">
    <location>
        <begin position="1"/>
        <end position="23"/>
    </location>
</feature>
<feature type="region of interest" description="Complementarity-determining-1">
    <location>
        <begin position="24"/>
        <end position="33"/>
    </location>
</feature>
<feature type="region of interest" description="Framework-2">
    <location>
        <begin position="34"/>
        <end position="48"/>
    </location>
</feature>
<feature type="region of interest" description="Complementarity-determining-2">
    <location>
        <begin position="49"/>
        <end position="55"/>
    </location>
</feature>
<feature type="region of interest" description="Framework-3">
    <location>
        <begin position="56"/>
        <end position="87"/>
    </location>
</feature>
<feature type="region of interest" description="Complementarity-determining-3">
    <location>
        <begin position="88"/>
        <end position="98"/>
    </location>
</feature>
<feature type="region of interest" description="Framework-4">
    <location>
        <begin position="99"/>
        <end position="108"/>
    </location>
</feature>
<feature type="disulfide bond" evidence="1">
    <location>
        <begin position="23"/>
        <end position="87"/>
    </location>
</feature>
<feature type="non-terminal residue">
    <location>
        <position position="108"/>
    </location>
</feature>